<proteinExistence type="predicted"/>
<dbReference type="EMBL" id="AF050086">
    <property type="protein sequence ID" value="AAD04815.1"/>
    <property type="molecule type" value="Genomic_RNA"/>
</dbReference>
<dbReference type="RefSeq" id="YP_249758.1">
    <property type="nucleotide sequence ID" value="NC_007156.1"/>
</dbReference>
<dbReference type="SMR" id="Q9YX38"/>
<dbReference type="KEGG" id="vg:5130477"/>
<dbReference type="Proteomes" id="UP000001677">
    <property type="component" value="Genome"/>
</dbReference>
<dbReference type="InterPro" id="IPR009268">
    <property type="entry name" value="Reo_P9"/>
</dbReference>
<dbReference type="Pfam" id="PF06043">
    <property type="entry name" value="Reo_P9"/>
    <property type="match status" value="1"/>
</dbReference>
<protein>
    <recommendedName>
        <fullName>Non-structural protein P9-1</fullName>
    </recommendedName>
</protein>
<name>VP91_FDVS</name>
<gene>
    <name type="primary">S9</name>
</gene>
<organism>
    <name type="scientific">Fiji disease virus (isolate Sugarcane)</name>
    <name type="common">FDV</name>
    <dbReference type="NCBI Taxonomy" id="648172"/>
    <lineage>
        <taxon>Viruses</taxon>
        <taxon>Riboviria</taxon>
        <taxon>Orthornavirae</taxon>
        <taxon>Duplornaviricota</taxon>
        <taxon>Resentoviricetes</taxon>
        <taxon>Reovirales</taxon>
        <taxon>Spinareoviridae</taxon>
        <taxon>Fijivirus</taxon>
        <taxon>Fiji disease virus</taxon>
    </lineage>
</organism>
<reference key="1">
    <citation type="journal article" date="1998" name="J. Gen. Virol.">
        <title>Molecular characterization of Fiji disease fijivirus genome segment 9.</title>
        <authorList>
            <person name="Soo H.M."/>
            <person name="Handley J.A."/>
            <person name="Maugeri M.M."/>
            <person name="Burns P."/>
            <person name="Smith G.R."/>
            <person name="Dale J.L."/>
            <person name="Harding R.M."/>
        </authorList>
    </citation>
    <scope>NUCLEOTIDE SEQUENCE [GENOMIC RNA]</scope>
</reference>
<organismHost>
    <name type="scientific">Saccharum officinarum</name>
    <name type="common">Sugarcane</name>
    <dbReference type="NCBI Taxonomy" id="4547"/>
</organismHost>
<evidence type="ECO:0000256" key="1">
    <source>
        <dbReference type="SAM" id="MobiDB-lite"/>
    </source>
</evidence>
<accession>Q9YX38</accession>
<feature type="chain" id="PRO_0000403401" description="Non-structural protein P9-1">
    <location>
        <begin position="1"/>
        <end position="335"/>
    </location>
</feature>
<feature type="region of interest" description="Disordered" evidence="1">
    <location>
        <begin position="27"/>
        <end position="48"/>
    </location>
</feature>
<feature type="compositionally biased region" description="Low complexity" evidence="1">
    <location>
        <begin position="27"/>
        <end position="42"/>
    </location>
</feature>
<keyword id="KW-1185">Reference proteome</keyword>
<sequence length="335" mass="38581">MMADSTRNAFGAYSITEIITTRNQNNFNANTKNQNQNTSNTQSSGGITRKPVMNDGLYALFDQLLKGVTFEESIYRGYDYSHLPNLETVFNTASDYVNGQYKIGFSEAQLDGYTLNKTFSVIMPEFSFSLEFIKNEEQSDRNPDENEQLKPKTRRIVVELVSLFNRDEIEYTPEQVRGEIALIALFKLYITGFLYHLNVNKSVYDQQLNLEKYRPLLVAIVGFESIDVKLKKLTPLYYTLATFSNYPLNILRYSLKTIVEVTNEMDQIIKRDGLFKQIDIKPMLGNTMSVGYSLRGIDNSSLFLAPKHYRQVRSRDDSNVREIISYDLSKIDFGF</sequence>